<organism>
    <name type="scientific">Shewanella baltica (strain OS155 / ATCC BAA-1091)</name>
    <dbReference type="NCBI Taxonomy" id="325240"/>
    <lineage>
        <taxon>Bacteria</taxon>
        <taxon>Pseudomonadati</taxon>
        <taxon>Pseudomonadota</taxon>
        <taxon>Gammaproteobacteria</taxon>
        <taxon>Alteromonadales</taxon>
        <taxon>Shewanellaceae</taxon>
        <taxon>Shewanella</taxon>
    </lineage>
</organism>
<evidence type="ECO:0000255" key="1">
    <source>
        <dbReference type="HAMAP-Rule" id="MF_00185"/>
    </source>
</evidence>
<comment type="function">
    <text evidence="1">Catalyzes the transfer of a dimethylallyl group onto the adenine at position 37 in tRNAs that read codons beginning with uridine, leading to the formation of N6-(dimethylallyl)adenosine (i(6)A).</text>
</comment>
<comment type="catalytic activity">
    <reaction evidence="1">
        <text>adenosine(37) in tRNA + dimethylallyl diphosphate = N(6)-dimethylallyladenosine(37) in tRNA + diphosphate</text>
        <dbReference type="Rhea" id="RHEA:26482"/>
        <dbReference type="Rhea" id="RHEA-COMP:10162"/>
        <dbReference type="Rhea" id="RHEA-COMP:10375"/>
        <dbReference type="ChEBI" id="CHEBI:33019"/>
        <dbReference type="ChEBI" id="CHEBI:57623"/>
        <dbReference type="ChEBI" id="CHEBI:74411"/>
        <dbReference type="ChEBI" id="CHEBI:74415"/>
        <dbReference type="EC" id="2.5.1.75"/>
    </reaction>
</comment>
<comment type="cofactor">
    <cofactor evidence="1">
        <name>Mg(2+)</name>
        <dbReference type="ChEBI" id="CHEBI:18420"/>
    </cofactor>
</comment>
<comment type="subunit">
    <text evidence="1">Monomer.</text>
</comment>
<comment type="similarity">
    <text evidence="1">Belongs to the IPP transferase family.</text>
</comment>
<name>MIAA_SHEB5</name>
<proteinExistence type="inferred from homology"/>
<feature type="chain" id="PRO_0000377309" description="tRNA dimethylallyltransferase">
    <location>
        <begin position="1"/>
        <end position="296"/>
    </location>
</feature>
<feature type="region of interest" description="Interaction with substrate tRNA" evidence="1">
    <location>
        <begin position="27"/>
        <end position="30"/>
    </location>
</feature>
<feature type="region of interest" description="Interaction with substrate tRNA" evidence="1">
    <location>
        <begin position="151"/>
        <end position="155"/>
    </location>
</feature>
<feature type="region of interest" description="Interaction with substrate tRNA" evidence="1">
    <location>
        <begin position="232"/>
        <end position="237"/>
    </location>
</feature>
<feature type="binding site" evidence="1">
    <location>
        <begin position="2"/>
        <end position="9"/>
    </location>
    <ligand>
        <name>ATP</name>
        <dbReference type="ChEBI" id="CHEBI:30616"/>
    </ligand>
</feature>
<feature type="binding site" evidence="1">
    <location>
        <begin position="4"/>
        <end position="9"/>
    </location>
    <ligand>
        <name>substrate</name>
    </ligand>
</feature>
<feature type="site" description="Interaction with substrate tRNA" evidence="1">
    <location>
        <position position="93"/>
    </location>
</feature>
<feature type="site" description="Interaction with substrate tRNA" evidence="1">
    <location>
        <position position="115"/>
    </location>
</feature>
<reference key="1">
    <citation type="submission" date="2007-02" db="EMBL/GenBank/DDBJ databases">
        <title>Complete sequence of chromosome of Shewanella baltica OS155.</title>
        <authorList>
            <consortium name="US DOE Joint Genome Institute"/>
            <person name="Copeland A."/>
            <person name="Lucas S."/>
            <person name="Lapidus A."/>
            <person name="Barry K."/>
            <person name="Detter J.C."/>
            <person name="Glavina del Rio T."/>
            <person name="Hammon N."/>
            <person name="Israni S."/>
            <person name="Dalin E."/>
            <person name="Tice H."/>
            <person name="Pitluck S."/>
            <person name="Sims D.R."/>
            <person name="Brettin T."/>
            <person name="Bruce D."/>
            <person name="Han C."/>
            <person name="Tapia R."/>
            <person name="Brainard J."/>
            <person name="Schmutz J."/>
            <person name="Larimer F."/>
            <person name="Land M."/>
            <person name="Hauser L."/>
            <person name="Kyrpides N."/>
            <person name="Mikhailova N."/>
            <person name="Brettar I."/>
            <person name="Klappenbach J."/>
            <person name="Konstantinidis K."/>
            <person name="Rodrigues J."/>
            <person name="Tiedje J."/>
            <person name="Richardson P."/>
        </authorList>
    </citation>
    <scope>NUCLEOTIDE SEQUENCE [LARGE SCALE GENOMIC DNA]</scope>
    <source>
        <strain>OS155 / ATCC BAA-1091</strain>
    </source>
</reference>
<gene>
    <name evidence="1" type="primary">miaA</name>
    <name type="ordered locus">Sbal_0557</name>
</gene>
<keyword id="KW-0067">ATP-binding</keyword>
<keyword id="KW-0460">Magnesium</keyword>
<keyword id="KW-0547">Nucleotide-binding</keyword>
<keyword id="KW-1185">Reference proteome</keyword>
<keyword id="KW-0808">Transferase</keyword>
<keyword id="KW-0819">tRNA processing</keyword>
<protein>
    <recommendedName>
        <fullName evidence="1">tRNA dimethylallyltransferase</fullName>
        <ecNumber evidence="1">2.5.1.75</ecNumber>
    </recommendedName>
    <alternativeName>
        <fullName evidence="1">Dimethylallyl diphosphate:tRNA dimethylallyltransferase</fullName>
        <shortName evidence="1">DMAPP:tRNA dimethylallyltransferase</shortName>
        <shortName evidence="1">DMATase</shortName>
    </alternativeName>
    <alternativeName>
        <fullName evidence="1">Isopentenyl-diphosphate:tRNA isopentenyltransferase</fullName>
        <shortName evidence="1">IPP transferase</shortName>
        <shortName evidence="1">IPPT</shortName>
        <shortName evidence="1">IPTase</shortName>
    </alternativeName>
</protein>
<accession>A3D023</accession>
<sequence length="296" mass="33222">MGPTASGKTALALELAEKHNCEIISVDSALIYRGMDIGSAKPSVDELARGPHRLIDIRDPRESYSAADFRADAIAEIEQIVSMGKTPVLVGGTMMYFKALLEGLSPLPSADEAIRAEIQAEADEKGWEALHDQLRDIDPVSAERIHPNDPQRLSRALEVYRISGKSMTELTQTKSAPLPYDVVQFAIAPRERKVLHDLIAQRFAIMLKQGFLEEVTELKARGDLHLDLPSMRCVGYRQCWQYLDGEFDYDTMVEKAVAATRQLAKRQLTWLRSWPELNWLESGAEGNLVTLMRQCR</sequence>
<dbReference type="EC" id="2.5.1.75" evidence="1"/>
<dbReference type="EMBL" id="CP000563">
    <property type="protein sequence ID" value="ABN60086.1"/>
    <property type="molecule type" value="Genomic_DNA"/>
</dbReference>
<dbReference type="SMR" id="A3D023"/>
<dbReference type="STRING" id="325240.Sbal_0557"/>
<dbReference type="KEGG" id="sbl:Sbal_0557"/>
<dbReference type="HOGENOM" id="CLU_032616_0_0_6"/>
<dbReference type="Proteomes" id="UP000001557">
    <property type="component" value="Chromosome"/>
</dbReference>
<dbReference type="GO" id="GO:0005524">
    <property type="term" value="F:ATP binding"/>
    <property type="evidence" value="ECO:0007669"/>
    <property type="project" value="UniProtKB-UniRule"/>
</dbReference>
<dbReference type="GO" id="GO:0052381">
    <property type="term" value="F:tRNA dimethylallyltransferase activity"/>
    <property type="evidence" value="ECO:0007669"/>
    <property type="project" value="UniProtKB-UniRule"/>
</dbReference>
<dbReference type="GO" id="GO:0006400">
    <property type="term" value="P:tRNA modification"/>
    <property type="evidence" value="ECO:0007669"/>
    <property type="project" value="TreeGrafter"/>
</dbReference>
<dbReference type="FunFam" id="1.10.20.140:FF:000001">
    <property type="entry name" value="tRNA dimethylallyltransferase"/>
    <property type="match status" value="1"/>
</dbReference>
<dbReference type="Gene3D" id="1.10.20.140">
    <property type="match status" value="1"/>
</dbReference>
<dbReference type="Gene3D" id="3.40.50.300">
    <property type="entry name" value="P-loop containing nucleotide triphosphate hydrolases"/>
    <property type="match status" value="1"/>
</dbReference>
<dbReference type="HAMAP" id="MF_00185">
    <property type="entry name" value="IPP_trans"/>
    <property type="match status" value="1"/>
</dbReference>
<dbReference type="InterPro" id="IPR039657">
    <property type="entry name" value="Dimethylallyltransferase"/>
</dbReference>
<dbReference type="InterPro" id="IPR018022">
    <property type="entry name" value="IPT"/>
</dbReference>
<dbReference type="InterPro" id="IPR027417">
    <property type="entry name" value="P-loop_NTPase"/>
</dbReference>
<dbReference type="NCBIfam" id="TIGR00174">
    <property type="entry name" value="miaA"/>
    <property type="match status" value="1"/>
</dbReference>
<dbReference type="PANTHER" id="PTHR11088">
    <property type="entry name" value="TRNA DIMETHYLALLYLTRANSFERASE"/>
    <property type="match status" value="1"/>
</dbReference>
<dbReference type="PANTHER" id="PTHR11088:SF60">
    <property type="entry name" value="TRNA DIMETHYLALLYLTRANSFERASE"/>
    <property type="match status" value="1"/>
</dbReference>
<dbReference type="Pfam" id="PF01715">
    <property type="entry name" value="IPPT"/>
    <property type="match status" value="1"/>
</dbReference>
<dbReference type="SUPFAM" id="SSF52540">
    <property type="entry name" value="P-loop containing nucleoside triphosphate hydrolases"/>
    <property type="match status" value="1"/>
</dbReference>